<reference key="1">
    <citation type="journal article" date="1997" name="DNA Res.">
        <title>Structural analysis of Arabidopsis thaliana chromosome 5. II. Sequence features of the regions of 1,044,062 bp covered by thirteen physically assigned P1 clones.</title>
        <authorList>
            <person name="Kotani H."/>
            <person name="Nakamura Y."/>
            <person name="Sato S."/>
            <person name="Kaneko T."/>
            <person name="Asamizu E."/>
            <person name="Miyajima N."/>
            <person name="Tabata S."/>
        </authorList>
    </citation>
    <scope>NUCLEOTIDE SEQUENCE [LARGE SCALE GENOMIC DNA]</scope>
    <source>
        <strain>cv. Columbia</strain>
    </source>
</reference>
<reference key="2">
    <citation type="journal article" date="2017" name="Plant J.">
        <title>Araport11: a complete reannotation of the Arabidopsis thaliana reference genome.</title>
        <authorList>
            <person name="Cheng C.Y."/>
            <person name="Krishnakumar V."/>
            <person name="Chan A.P."/>
            <person name="Thibaud-Nissen F."/>
            <person name="Schobel S."/>
            <person name="Town C.D."/>
        </authorList>
    </citation>
    <scope>GENOME REANNOTATION</scope>
    <source>
        <strain>cv. Columbia</strain>
    </source>
</reference>
<reference key="3">
    <citation type="journal article" date="2003" name="Science">
        <title>Empirical analysis of transcriptional activity in the Arabidopsis genome.</title>
        <authorList>
            <person name="Yamada K."/>
            <person name="Lim J."/>
            <person name="Dale J.M."/>
            <person name="Chen H."/>
            <person name="Shinn P."/>
            <person name="Palm C.J."/>
            <person name="Southwick A.M."/>
            <person name="Wu H.C."/>
            <person name="Kim C.J."/>
            <person name="Nguyen M."/>
            <person name="Pham P.K."/>
            <person name="Cheuk R.F."/>
            <person name="Karlin-Newmann G."/>
            <person name="Liu S.X."/>
            <person name="Lam B."/>
            <person name="Sakano H."/>
            <person name="Wu T."/>
            <person name="Yu G."/>
            <person name="Miranda M."/>
            <person name="Quach H.L."/>
            <person name="Tripp M."/>
            <person name="Chang C.H."/>
            <person name="Lee J.M."/>
            <person name="Toriumi M.J."/>
            <person name="Chan M.M."/>
            <person name="Tang C.C."/>
            <person name="Onodera C.S."/>
            <person name="Deng J.M."/>
            <person name="Akiyama K."/>
            <person name="Ansari Y."/>
            <person name="Arakawa T."/>
            <person name="Banh J."/>
            <person name="Banno F."/>
            <person name="Bowser L."/>
            <person name="Brooks S.Y."/>
            <person name="Carninci P."/>
            <person name="Chao Q."/>
            <person name="Choy N."/>
            <person name="Enju A."/>
            <person name="Goldsmith A.D."/>
            <person name="Gurjal M."/>
            <person name="Hansen N.F."/>
            <person name="Hayashizaki Y."/>
            <person name="Johnson-Hopson C."/>
            <person name="Hsuan V.W."/>
            <person name="Iida K."/>
            <person name="Karnes M."/>
            <person name="Khan S."/>
            <person name="Koesema E."/>
            <person name="Ishida J."/>
            <person name="Jiang P.X."/>
            <person name="Jones T."/>
            <person name="Kawai J."/>
            <person name="Kamiya A."/>
            <person name="Meyers C."/>
            <person name="Nakajima M."/>
            <person name="Narusaka M."/>
            <person name="Seki M."/>
            <person name="Sakurai T."/>
            <person name="Satou M."/>
            <person name="Tamse R."/>
            <person name="Vaysberg M."/>
            <person name="Wallender E.K."/>
            <person name="Wong C."/>
            <person name="Yamamura Y."/>
            <person name="Yuan S."/>
            <person name="Shinozaki K."/>
            <person name="Davis R.W."/>
            <person name="Theologis A."/>
            <person name="Ecker J.R."/>
        </authorList>
    </citation>
    <scope>NUCLEOTIDE SEQUENCE [LARGE SCALE MRNA]</scope>
    <source>
        <strain>cv. Columbia</strain>
    </source>
</reference>
<reference key="4">
    <citation type="journal article" date="2004" name="Plant Physiol.">
        <title>Identification of genes required for embryo development in Arabidopsis.</title>
        <authorList>
            <person name="Tzafrir I."/>
            <person name="Pena-Muralla R."/>
            <person name="Dickerman A."/>
            <person name="Berg M."/>
            <person name="Rogers R."/>
            <person name="Hutchens S."/>
            <person name="Sweeney T.C."/>
            <person name="McElver J."/>
            <person name="Aux G."/>
            <person name="Patton D."/>
            <person name="Meinke D."/>
        </authorList>
    </citation>
    <scope>IDENTIFICATION</scope>
</reference>
<reference key="5">
    <citation type="journal article" date="2009" name="Plant Physiol.">
        <title>Large-scale Arabidopsis phosphoproteome profiling reveals novel chloroplast kinase substrates and phosphorylation networks.</title>
        <authorList>
            <person name="Reiland S."/>
            <person name="Messerli G."/>
            <person name="Baerenfaller K."/>
            <person name="Gerrits B."/>
            <person name="Endler A."/>
            <person name="Grossmann J."/>
            <person name="Gruissem W."/>
            <person name="Baginsky S."/>
        </authorList>
    </citation>
    <scope>PHOSPHORYLATION [LARGE SCALE ANALYSIS] AT THR-649</scope>
    <scope>IDENTIFICATION BY MASS SPECTROMETRY [LARGE SCALE ANALYSIS]</scope>
</reference>
<reference key="6">
    <citation type="journal article" date="2010" name="Physiol. Plantarum">
        <title>EMB1211 is required for normal embryo development and influences chloroplast biogenesis in Arabidopsis.</title>
        <authorList>
            <person name="Liang Q."/>
            <person name="Lu X."/>
            <person name="Jiang L."/>
            <person name="Wang C."/>
            <person name="Fan Y."/>
            <person name="Zhang C."/>
        </authorList>
    </citation>
    <scope>FUNCTION</scope>
    <scope>DISRUPTION PHENOTYPE</scope>
    <scope>DEVELOPMENTAL STAGE</scope>
    <scope>TISSUE SPECIFICITY</scope>
</reference>
<reference key="7">
    <citation type="journal article" date="2013" name="Science">
        <title>Uncovering the protein translocon at the chloroplast inner envelope membrane.</title>
        <authorList>
            <person name="Kikuchi S."/>
            <person name="Bedard J."/>
            <person name="Hirano M."/>
            <person name="Hirabayashi Y."/>
            <person name="Oishi M."/>
            <person name="Imai M."/>
            <person name="Takase M."/>
            <person name="Ide T."/>
            <person name="Nakai M."/>
        </authorList>
    </citation>
    <scope>FUNCTION</scope>
    <scope>COMPONENT OF THE 1-MD COMPLEX</scope>
    <scope>SUBUNIT</scope>
    <scope>IDENTIFICATION BY MASS SPECTROMETRY</scope>
    <scope>DEAMIDATION AT ASN-238</scope>
    <scope>SUBCELLULAR LOCATION</scope>
    <scope>DISRUPTION PHENOTYPE</scope>
</reference>
<name>TI100_ARATH</name>
<keyword id="KW-0002">3D-structure</keyword>
<keyword id="KW-0025">Alternative splicing</keyword>
<keyword id="KW-0150">Chloroplast</keyword>
<keyword id="KW-0175">Coiled coil</keyword>
<keyword id="KW-0472">Membrane</keyword>
<keyword id="KW-0597">Phosphoprotein</keyword>
<keyword id="KW-0934">Plastid</keyword>
<keyword id="KW-1001">Plastid inner membrane</keyword>
<keyword id="KW-0653">Protein transport</keyword>
<keyword id="KW-1185">Reference proteome</keyword>
<keyword id="KW-0677">Repeat</keyword>
<keyword id="KW-0813">Transport</keyword>
<sequence>MANEELTESQQQEDPSQQLPNADEEKGSDSDSNSDSDASSQSSGDDFYISESENEAEGDNTIFNYVRPSDIPPDPNANPETNIRRFNRVLDGKRVKRMQEEEEDKYTFYEDLFDFPRDPERWKEQDLREIWADGPLEMTKPGWDPAWADEDDWDVVNDEIQEGRDPGIQPFYVPYRKPYPAIPDNHYDIENAKGVVEELDRIEEFLQWVSYIFPDGSSYEGTVWDDLAQGKGVYIAENGLVRYEGEWLQNDMEGHGVIDVDIPDIEPIPGSKLEAKMRAEGRIIKRDYMTPEDRKWLEMDVEDSVALTDGNFQVPFYENEEWVTQFGEKPEKGRYRYAGQWKHSRMHGCGVYEVNERILYGRFYFGELLEEEHGCTVDICALHSGLAEVAAAKARMFVNKPDGMIREERGPYGDPQHPYFYEEDDVWMAPGFINQFYEVPEYWETYVGEVDQEREMWLNSFYKAPLRLPMPAELEHWWENVEVTPEFVLLNKEPEPDPNDPSKLVQKEDPVILHTPTGRIINYVEDEKHGIRLFWQPPLEEGEEVDPSKVEFLPLGFDEFYGKEVVVKKEHPIKSFVLGIEKSVKPMLDGLEKWTEEKKKAYEERKEMIQQELELVEAEICLEEAIEDMDEELKKKEQEEEKKTEMGLTEEDEDVLVPVYKEEKVVTAKEKIQENKQEEKYKDDDDEDDDDGDDDDDDDDDDDLGPSSFGSADKGRRNSPFSSSSLSFASCTLFPAVQSRLESSFLAWKQHRAEPSKVNTGIIKGADTASASIHFPPLSSNNARLKMGKVANRGCVQRSYGSSRSQSQLMSLSRLLSCNASSSSSPPDSSSSEYLKDSGLWETPVGDMSVVLSLQIQTKCSDLFAETPAVS</sequence>
<accession>Q8LPR8</accession>
<accession>Q9FNJ7</accession>
<gene>
    <name evidence="7" type="primary">TIC100</name>
    <name evidence="6" type="synonym">EMB1211</name>
    <name evidence="9" type="ordered locus">At5g22640</name>
    <name evidence="10" type="ORF">MDJ22.6</name>
</gene>
<organism>
    <name type="scientific">Arabidopsis thaliana</name>
    <name type="common">Mouse-ear cress</name>
    <dbReference type="NCBI Taxonomy" id="3702"/>
    <lineage>
        <taxon>Eukaryota</taxon>
        <taxon>Viridiplantae</taxon>
        <taxon>Streptophyta</taxon>
        <taxon>Embryophyta</taxon>
        <taxon>Tracheophyta</taxon>
        <taxon>Spermatophyta</taxon>
        <taxon>Magnoliopsida</taxon>
        <taxon>eudicotyledons</taxon>
        <taxon>Gunneridae</taxon>
        <taxon>Pentapetalae</taxon>
        <taxon>rosids</taxon>
        <taxon>malvids</taxon>
        <taxon>Brassicales</taxon>
        <taxon>Brassicaceae</taxon>
        <taxon>Camelineae</taxon>
        <taxon>Arabidopsis</taxon>
    </lineage>
</organism>
<comment type="function">
    <text evidence="4 5">Involved in protein precursor import into chloroplasts. May be part of an intermediate translocation complex acting as a protein-conducting channel at the inner envelope (PubMed:23372012). Plays an important role during embryogenesis and chloroplast biogenesis (PubMed:20738804).</text>
</comment>
<comment type="subunit">
    <text evidence="1 5">Part of the Tic complex. Component of the 1-MD complex, composed of TIC20-I, TIC214, TIC100 and TIC56. Interacts with the translocating preproteins. Hydrolysis of ATP is essential for the formation of this complex (PubMed:23372012). The 1-MD complex interacts with TIC21 (By similarity).</text>
</comment>
<comment type="subcellular location">
    <subcellularLocation>
        <location evidence="5">Plastid</location>
        <location evidence="5">Chloroplast inner membrane</location>
    </subcellularLocation>
</comment>
<comment type="alternative products">
    <event type="alternative splicing"/>
    <isoform>
        <id>Q8LPR8-1</id>
        <name>1</name>
        <sequence type="displayed"/>
    </isoform>
    <text>A number of isoforms are produced. According to EST sequences.</text>
</comment>
<comment type="tissue specificity">
    <text evidence="4">Preferentially expressed in ovules, and moderately expressed in leaves and siliques.</text>
</comment>
<comment type="developmental stage">
    <text evidence="4">Expressed in developing embryo.</text>
</comment>
<comment type="disruption phenotype">
    <text evidence="4 5">Severe defects during embryogenesis, producing abnormal embryos and thereby leading to a lethality of young seedlings.</text>
</comment>
<comment type="sequence caution" evidence="8">
    <conflict type="erroneous gene model prediction">
        <sequence resource="EMBL-CDS" id="BAB11670"/>
    </conflict>
</comment>
<evidence type="ECO:0000250" key="1">
    <source>
        <dbReference type="UniProtKB" id="Q8GZ79"/>
    </source>
</evidence>
<evidence type="ECO:0000255" key="2"/>
<evidence type="ECO:0000256" key="3">
    <source>
        <dbReference type="SAM" id="MobiDB-lite"/>
    </source>
</evidence>
<evidence type="ECO:0000269" key="4">
    <source>
    </source>
</evidence>
<evidence type="ECO:0000269" key="5">
    <source>
    </source>
</evidence>
<evidence type="ECO:0000303" key="6">
    <source>
    </source>
</evidence>
<evidence type="ECO:0000303" key="7">
    <source>
    </source>
</evidence>
<evidence type="ECO:0000305" key="8"/>
<evidence type="ECO:0000312" key="9">
    <source>
        <dbReference type="Araport" id="AT5G22640"/>
    </source>
</evidence>
<evidence type="ECO:0000312" key="10">
    <source>
        <dbReference type="EMBL" id="BAB11670.1"/>
    </source>
</evidence>
<evidence type="ECO:0007744" key="11">
    <source>
    </source>
</evidence>
<evidence type="ECO:0007829" key="12">
    <source>
        <dbReference type="PDB" id="8Z9Y"/>
    </source>
</evidence>
<protein>
    <recommendedName>
        <fullName evidence="7">Protein TIC 100</fullName>
    </recommendedName>
    <alternativeName>
        <fullName evidence="6">Protein EMBRYO DEFECTIVE 1211</fullName>
    </alternativeName>
    <alternativeName>
        <fullName evidence="7">Translocon at the inner envelope membrane of chloroplasts 100</fullName>
        <shortName evidence="7">AtTIC100</shortName>
    </alternativeName>
</protein>
<dbReference type="EMBL" id="AB006699">
    <property type="protein sequence ID" value="BAB11670.1"/>
    <property type="status" value="ALT_SEQ"/>
    <property type="molecule type" value="Genomic_DNA"/>
</dbReference>
<dbReference type="EMBL" id="CP002688">
    <property type="protein sequence ID" value="AED93056.1"/>
    <property type="molecule type" value="Genomic_DNA"/>
</dbReference>
<dbReference type="EMBL" id="AY094427">
    <property type="protein sequence ID" value="AAM19800.1"/>
    <property type="molecule type" value="mRNA"/>
</dbReference>
<dbReference type="RefSeq" id="NP_197656.2">
    <molecule id="Q8LPR8-1"/>
    <property type="nucleotide sequence ID" value="NM_122170.3"/>
</dbReference>
<dbReference type="PDB" id="8Z9Y">
    <property type="method" value="EM"/>
    <property type="resolution" value="2.50 A"/>
    <property type="chains" value="D=1-871"/>
</dbReference>
<dbReference type="PDBsum" id="8Z9Y"/>
<dbReference type="EMDB" id="EMD-39872"/>
<dbReference type="SMR" id="Q8LPR8"/>
<dbReference type="FunCoup" id="Q8LPR8">
    <property type="interactions" value="1422"/>
</dbReference>
<dbReference type="STRING" id="3702.Q8LPR8"/>
<dbReference type="TCDB" id="3.A.9.1.2">
    <property type="family name" value="the chloroplast envelope protein translocase (cept or tic-toc) family"/>
</dbReference>
<dbReference type="iPTMnet" id="Q8LPR8"/>
<dbReference type="PaxDb" id="3702-AT5G22640.1"/>
<dbReference type="ProMEX" id="Q8LPR8"/>
<dbReference type="EnsemblPlants" id="AT5G22640.1">
    <molecule id="Q8LPR8-1"/>
    <property type="protein sequence ID" value="AT5G22640.1"/>
    <property type="gene ID" value="AT5G22640"/>
</dbReference>
<dbReference type="GeneID" id="832327"/>
<dbReference type="Gramene" id="AT5G22640.1">
    <molecule id="Q8LPR8-1"/>
    <property type="protein sequence ID" value="AT5G22640.1"/>
    <property type="gene ID" value="AT5G22640"/>
</dbReference>
<dbReference type="KEGG" id="ath:AT5G22640"/>
<dbReference type="Araport" id="AT5G22640"/>
<dbReference type="TAIR" id="AT5G22640">
    <property type="gene designation" value="EMB1211"/>
</dbReference>
<dbReference type="eggNOG" id="ENOG502QVAX">
    <property type="taxonomic scope" value="Eukaryota"/>
</dbReference>
<dbReference type="InParanoid" id="Q8LPR8"/>
<dbReference type="OMA" id="EYWWSKE"/>
<dbReference type="OrthoDB" id="423343at2759"/>
<dbReference type="PhylomeDB" id="Q8LPR8"/>
<dbReference type="PRO" id="PR:Q8LPR8"/>
<dbReference type="Proteomes" id="UP000006548">
    <property type="component" value="Chromosome 5"/>
</dbReference>
<dbReference type="ExpressionAtlas" id="Q8LPR8">
    <property type="expression patterns" value="baseline and differential"/>
</dbReference>
<dbReference type="GO" id="GO:0009507">
    <property type="term" value="C:chloroplast"/>
    <property type="evidence" value="ECO:0007005"/>
    <property type="project" value="TAIR"/>
</dbReference>
<dbReference type="GO" id="GO:0009941">
    <property type="term" value="C:chloroplast envelope"/>
    <property type="evidence" value="ECO:0007005"/>
    <property type="project" value="TAIR"/>
</dbReference>
<dbReference type="GO" id="GO:0009706">
    <property type="term" value="C:chloroplast inner membrane"/>
    <property type="evidence" value="ECO:0000314"/>
    <property type="project" value="TAIR"/>
</dbReference>
<dbReference type="GO" id="GO:0009535">
    <property type="term" value="C:chloroplast thylakoid membrane"/>
    <property type="evidence" value="ECO:0007005"/>
    <property type="project" value="TAIR"/>
</dbReference>
<dbReference type="GO" id="GO:0009536">
    <property type="term" value="C:plastid"/>
    <property type="evidence" value="ECO:0007005"/>
    <property type="project" value="TAIR"/>
</dbReference>
<dbReference type="GO" id="GO:0008320">
    <property type="term" value="F:protein transmembrane transporter activity"/>
    <property type="evidence" value="ECO:0000314"/>
    <property type="project" value="TAIR"/>
</dbReference>
<dbReference type="GO" id="GO:0009658">
    <property type="term" value="P:chloroplast organization"/>
    <property type="evidence" value="ECO:0000315"/>
    <property type="project" value="TAIR"/>
</dbReference>
<dbReference type="GO" id="GO:0009793">
    <property type="term" value="P:embryo development ending in seed dormancy"/>
    <property type="evidence" value="ECO:0000315"/>
    <property type="project" value="TAIR"/>
</dbReference>
<dbReference type="GO" id="GO:0045037">
    <property type="term" value="P:protein import into chloroplast stroma"/>
    <property type="evidence" value="ECO:0000314"/>
    <property type="project" value="TAIR"/>
</dbReference>
<dbReference type="Gene3D" id="2.20.110.10">
    <property type="entry name" value="Histone H3 K4-specific methyltransferase SET7/9 N-terminal domain"/>
    <property type="match status" value="1"/>
</dbReference>
<dbReference type="InterPro" id="IPR003409">
    <property type="entry name" value="MORN"/>
</dbReference>
<dbReference type="PANTHER" id="PTHR43215:SF13">
    <property type="entry name" value="PROTEIN TIC 100"/>
    <property type="match status" value="1"/>
</dbReference>
<dbReference type="PANTHER" id="PTHR43215">
    <property type="entry name" value="RADIAL SPOKE HEAD 1 HOMOLOG"/>
    <property type="match status" value="1"/>
</dbReference>
<dbReference type="Pfam" id="PF02493">
    <property type="entry name" value="MORN"/>
    <property type="match status" value="3"/>
</dbReference>
<dbReference type="SUPFAM" id="SSF82185">
    <property type="entry name" value="Histone H3 K4-specific methyltransferase SET7/9 N-terminal domain"/>
    <property type="match status" value="1"/>
</dbReference>
<feature type="chain" id="PRO_0000431667" description="Protein TIC 100">
    <location>
        <begin position="1"/>
        <end position="871"/>
    </location>
</feature>
<feature type="repeat" description="MORN 1" evidence="2">
    <location>
        <begin position="219"/>
        <end position="239"/>
    </location>
</feature>
<feature type="repeat" description="MORN 2" evidence="2">
    <location>
        <begin position="243"/>
        <end position="257"/>
    </location>
</feature>
<feature type="repeat" description="MORN 3" evidence="2">
    <location>
        <begin position="337"/>
        <end position="352"/>
    </location>
</feature>
<feature type="region of interest" description="Disordered" evidence="3">
    <location>
        <begin position="1"/>
        <end position="85"/>
    </location>
</feature>
<feature type="region of interest" description="Disordered" evidence="3">
    <location>
        <begin position="631"/>
        <end position="654"/>
    </location>
</feature>
<feature type="region of interest" description="Disordered" evidence="3">
    <location>
        <begin position="669"/>
        <end position="721"/>
    </location>
</feature>
<feature type="coiled-coil region" evidence="2">
    <location>
        <begin position="587"/>
        <end position="647"/>
    </location>
</feature>
<feature type="compositionally biased region" description="Polar residues" evidence="3">
    <location>
        <begin position="8"/>
        <end position="20"/>
    </location>
</feature>
<feature type="compositionally biased region" description="Low complexity" evidence="3">
    <location>
        <begin position="30"/>
        <end position="46"/>
    </location>
</feature>
<feature type="compositionally biased region" description="Basic and acidic residues" evidence="3">
    <location>
        <begin position="632"/>
        <end position="645"/>
    </location>
</feature>
<feature type="compositionally biased region" description="Basic and acidic residues" evidence="3">
    <location>
        <begin position="669"/>
        <end position="683"/>
    </location>
</feature>
<feature type="compositionally biased region" description="Acidic residues" evidence="3">
    <location>
        <begin position="684"/>
        <end position="704"/>
    </location>
</feature>
<feature type="modified residue" description="Deamidated asparagine" evidence="5">
    <location>
        <position position="238"/>
    </location>
</feature>
<feature type="modified residue" description="Phosphothreonine" evidence="11">
    <location>
        <position position="649"/>
    </location>
</feature>
<feature type="helix" evidence="12">
    <location>
        <begin position="109"/>
        <end position="112"/>
    </location>
</feature>
<feature type="turn" evidence="12">
    <location>
        <begin position="124"/>
        <end position="128"/>
    </location>
</feature>
<feature type="strand" evidence="12">
    <location>
        <begin position="140"/>
        <end position="142"/>
    </location>
</feature>
<feature type="helix" evidence="12">
    <location>
        <begin position="150"/>
        <end position="162"/>
    </location>
</feature>
<feature type="strand" evidence="12">
    <location>
        <begin position="186"/>
        <end position="188"/>
    </location>
</feature>
<feature type="helix" evidence="12">
    <location>
        <begin position="192"/>
        <end position="199"/>
    </location>
</feature>
<feature type="strand" evidence="12">
    <location>
        <begin position="207"/>
        <end position="212"/>
    </location>
</feature>
<feature type="strand" evidence="12">
    <location>
        <begin position="218"/>
        <end position="224"/>
    </location>
</feature>
<feature type="strand" evidence="12">
    <location>
        <begin position="227"/>
        <end position="236"/>
    </location>
</feature>
<feature type="helix" evidence="12">
    <location>
        <begin position="237"/>
        <end position="239"/>
    </location>
</feature>
<feature type="strand" evidence="12">
    <location>
        <begin position="241"/>
        <end position="261"/>
    </location>
</feature>
<feature type="strand" evidence="12">
    <location>
        <begin position="264"/>
        <end position="267"/>
    </location>
</feature>
<feature type="helix" evidence="12">
    <location>
        <begin position="272"/>
        <end position="279"/>
    </location>
</feature>
<feature type="helix" evidence="12">
    <location>
        <begin position="285"/>
        <end position="288"/>
    </location>
</feature>
<feature type="helix" evidence="12">
    <location>
        <begin position="291"/>
        <end position="308"/>
    </location>
</feature>
<feature type="helix" evidence="12">
    <location>
        <begin position="316"/>
        <end position="318"/>
    </location>
</feature>
<feature type="helix" evidence="12">
    <location>
        <begin position="320"/>
        <end position="326"/>
    </location>
</feature>
<feature type="strand" evidence="12">
    <location>
        <begin position="333"/>
        <end position="342"/>
    </location>
</feature>
<feature type="strand" evidence="12">
    <location>
        <begin position="345"/>
        <end position="356"/>
    </location>
</feature>
<feature type="strand" evidence="12">
    <location>
        <begin position="358"/>
        <end position="364"/>
    </location>
</feature>
<feature type="helix" evidence="12">
    <location>
        <begin position="377"/>
        <end position="394"/>
    </location>
</feature>
<feature type="helix" evidence="12">
    <location>
        <begin position="395"/>
        <end position="397"/>
    </location>
</feature>
<feature type="helix" evidence="12">
    <location>
        <begin position="404"/>
        <end position="408"/>
    </location>
</feature>
<feature type="turn" evidence="12">
    <location>
        <begin position="423"/>
        <end position="425"/>
    </location>
</feature>
<feature type="helix" evidence="12">
    <location>
        <begin position="426"/>
        <end position="428"/>
    </location>
</feature>
<feature type="helix" evidence="12">
    <location>
        <begin position="432"/>
        <end position="436"/>
    </location>
</feature>
<feature type="helix" evidence="12">
    <location>
        <begin position="441"/>
        <end position="443"/>
    </location>
</feature>
<feature type="helix" evidence="12">
    <location>
        <begin position="444"/>
        <end position="462"/>
    </location>
</feature>
<feature type="helix" evidence="12">
    <location>
        <begin position="464"/>
        <end position="466"/>
    </location>
</feature>
<feature type="helix" evidence="12">
    <location>
        <begin position="471"/>
        <end position="480"/>
    </location>
</feature>
<feature type="strand" evidence="12">
    <location>
        <begin position="486"/>
        <end position="490"/>
    </location>
</feature>
<feature type="strand" evidence="12">
    <location>
        <begin position="500"/>
        <end position="502"/>
    </location>
</feature>
<feature type="strand" evidence="12">
    <location>
        <begin position="511"/>
        <end position="514"/>
    </location>
</feature>
<feature type="turn" evidence="12">
    <location>
        <begin position="515"/>
        <end position="518"/>
    </location>
</feature>
<feature type="strand" evidence="12">
    <location>
        <begin position="519"/>
        <end position="525"/>
    </location>
</feature>
<feature type="strand" evidence="12">
    <location>
        <begin position="530"/>
        <end position="537"/>
    </location>
</feature>
<feature type="helix" evidence="12">
    <location>
        <begin position="557"/>
        <end position="561"/>
    </location>
</feature>
<proteinExistence type="evidence at protein level"/>